<keyword id="KW-0067">ATP-binding</keyword>
<keyword id="KW-0997">Cell inner membrane</keyword>
<keyword id="KW-1003">Cell membrane</keyword>
<keyword id="KW-0201">Cytochrome c-type biogenesis</keyword>
<keyword id="KW-0472">Membrane</keyword>
<keyword id="KW-0547">Nucleotide-binding</keyword>
<keyword id="KW-1278">Translocase</keyword>
<keyword id="KW-0813">Transport</keyword>
<accession>Q487I2</accession>
<reference key="1">
    <citation type="journal article" date="2005" name="Proc. Natl. Acad. Sci. U.S.A.">
        <title>The psychrophilic lifestyle as revealed by the genome sequence of Colwellia psychrerythraea 34H through genomic and proteomic analyses.</title>
        <authorList>
            <person name="Methe B.A."/>
            <person name="Nelson K.E."/>
            <person name="Deming J.W."/>
            <person name="Momen B."/>
            <person name="Melamud E."/>
            <person name="Zhang X."/>
            <person name="Moult J."/>
            <person name="Madupu R."/>
            <person name="Nelson W.C."/>
            <person name="Dodson R.J."/>
            <person name="Brinkac L.M."/>
            <person name="Daugherty S.C."/>
            <person name="Durkin A.S."/>
            <person name="DeBoy R.T."/>
            <person name="Kolonay J.F."/>
            <person name="Sullivan S.A."/>
            <person name="Zhou L."/>
            <person name="Davidsen T.M."/>
            <person name="Wu M."/>
            <person name="Huston A.L."/>
            <person name="Lewis M."/>
            <person name="Weaver B."/>
            <person name="Weidman J.F."/>
            <person name="Khouri H."/>
            <person name="Utterback T.R."/>
            <person name="Feldblyum T.V."/>
            <person name="Fraser C.M."/>
        </authorList>
    </citation>
    <scope>NUCLEOTIDE SEQUENCE [LARGE SCALE GENOMIC DNA]</scope>
    <source>
        <strain>34H / ATCC BAA-681</strain>
    </source>
</reference>
<comment type="function">
    <text evidence="1">Part of the ABC transporter complex CcmAB involved in the biogenesis of c-type cytochromes; once thought to export heme, this seems not to be the case, but its exact role is uncertain. Responsible for energy coupling to the transport system.</text>
</comment>
<comment type="catalytic activity">
    <reaction evidence="1">
        <text>heme b(in) + ATP + H2O = heme b(out) + ADP + phosphate + H(+)</text>
        <dbReference type="Rhea" id="RHEA:19261"/>
        <dbReference type="ChEBI" id="CHEBI:15377"/>
        <dbReference type="ChEBI" id="CHEBI:15378"/>
        <dbReference type="ChEBI" id="CHEBI:30616"/>
        <dbReference type="ChEBI" id="CHEBI:43474"/>
        <dbReference type="ChEBI" id="CHEBI:60344"/>
        <dbReference type="ChEBI" id="CHEBI:456216"/>
        <dbReference type="EC" id="7.6.2.5"/>
    </reaction>
</comment>
<comment type="subunit">
    <text evidence="1">The complex is composed of two ATP-binding proteins (CcmA) and two transmembrane proteins (CcmB).</text>
</comment>
<comment type="subcellular location">
    <subcellularLocation>
        <location evidence="1">Cell inner membrane</location>
        <topology evidence="1">Peripheral membrane protein</topology>
    </subcellularLocation>
</comment>
<comment type="similarity">
    <text evidence="1">Belongs to the ABC transporter superfamily. CcmA exporter (TC 3.A.1.107) family.</text>
</comment>
<evidence type="ECO:0000255" key="1">
    <source>
        <dbReference type="HAMAP-Rule" id="MF_01707"/>
    </source>
</evidence>
<sequence length="219" mass="24442">MSKKNSTPLISAVNLTCIREERLLFDELSLQINAGDIVQVEGPNGSGKTSLLRILSGLSQPYDGQILYREQLISHCREEFHQNLLYFGHLSGVKGEMTAEENLDFNLALHGNKTQESLSYLAKVNLSGFEECLASHLSAGQHRRIALARLYQSNVPIWILDEPFTAIDKQGVASLERLFSLHAERGGCVILTTHQDLISIKPEQIKKITLDYSYDSAVD</sequence>
<protein>
    <recommendedName>
        <fullName evidence="1">Cytochrome c biogenesis ATP-binding export protein CcmA</fullName>
        <ecNumber evidence="1">7.6.2.5</ecNumber>
    </recommendedName>
    <alternativeName>
        <fullName evidence="1">Heme exporter protein A</fullName>
    </alternativeName>
</protein>
<gene>
    <name evidence="1" type="primary">ccmA</name>
    <name type="ordered locus">CPS_1034</name>
</gene>
<organism>
    <name type="scientific">Colwellia psychrerythraea (strain 34H / ATCC BAA-681)</name>
    <name type="common">Vibrio psychroerythus</name>
    <dbReference type="NCBI Taxonomy" id="167879"/>
    <lineage>
        <taxon>Bacteria</taxon>
        <taxon>Pseudomonadati</taxon>
        <taxon>Pseudomonadota</taxon>
        <taxon>Gammaproteobacteria</taxon>
        <taxon>Alteromonadales</taxon>
        <taxon>Colwelliaceae</taxon>
        <taxon>Colwellia</taxon>
    </lineage>
</organism>
<name>CCMA_COLP3</name>
<dbReference type="EC" id="7.6.2.5" evidence="1"/>
<dbReference type="EMBL" id="CP000083">
    <property type="protein sequence ID" value="AAZ25480.1"/>
    <property type="molecule type" value="Genomic_DNA"/>
</dbReference>
<dbReference type="SMR" id="Q487I2"/>
<dbReference type="STRING" id="167879.CPS_1034"/>
<dbReference type="KEGG" id="cps:CPS_1034"/>
<dbReference type="HOGENOM" id="CLU_000604_1_2_6"/>
<dbReference type="Proteomes" id="UP000000547">
    <property type="component" value="Chromosome"/>
</dbReference>
<dbReference type="GO" id="GO:0005886">
    <property type="term" value="C:plasma membrane"/>
    <property type="evidence" value="ECO:0007669"/>
    <property type="project" value="UniProtKB-SubCell"/>
</dbReference>
<dbReference type="GO" id="GO:0015439">
    <property type="term" value="F:ABC-type heme transporter activity"/>
    <property type="evidence" value="ECO:0007669"/>
    <property type="project" value="UniProtKB-EC"/>
</dbReference>
<dbReference type="GO" id="GO:0005524">
    <property type="term" value="F:ATP binding"/>
    <property type="evidence" value="ECO:0007669"/>
    <property type="project" value="UniProtKB-KW"/>
</dbReference>
<dbReference type="GO" id="GO:0016887">
    <property type="term" value="F:ATP hydrolysis activity"/>
    <property type="evidence" value="ECO:0007669"/>
    <property type="project" value="InterPro"/>
</dbReference>
<dbReference type="GO" id="GO:0017004">
    <property type="term" value="P:cytochrome complex assembly"/>
    <property type="evidence" value="ECO:0007669"/>
    <property type="project" value="UniProtKB-KW"/>
</dbReference>
<dbReference type="Gene3D" id="3.40.50.300">
    <property type="entry name" value="P-loop containing nucleotide triphosphate hydrolases"/>
    <property type="match status" value="1"/>
</dbReference>
<dbReference type="InterPro" id="IPR003593">
    <property type="entry name" value="AAA+_ATPase"/>
</dbReference>
<dbReference type="InterPro" id="IPR003439">
    <property type="entry name" value="ABC_transporter-like_ATP-bd"/>
</dbReference>
<dbReference type="InterPro" id="IPR005895">
    <property type="entry name" value="ABC_transptr_haem_export_CcmA"/>
</dbReference>
<dbReference type="InterPro" id="IPR027417">
    <property type="entry name" value="P-loop_NTPase"/>
</dbReference>
<dbReference type="NCBIfam" id="TIGR01189">
    <property type="entry name" value="ccmA"/>
    <property type="match status" value="1"/>
</dbReference>
<dbReference type="NCBIfam" id="NF010061">
    <property type="entry name" value="PRK13538.1"/>
    <property type="match status" value="1"/>
</dbReference>
<dbReference type="PANTHER" id="PTHR43499">
    <property type="entry name" value="ABC TRANSPORTER I FAMILY MEMBER 1"/>
    <property type="match status" value="1"/>
</dbReference>
<dbReference type="PANTHER" id="PTHR43499:SF1">
    <property type="entry name" value="ABC TRANSPORTER I FAMILY MEMBER 1"/>
    <property type="match status" value="1"/>
</dbReference>
<dbReference type="Pfam" id="PF00005">
    <property type="entry name" value="ABC_tran"/>
    <property type="match status" value="1"/>
</dbReference>
<dbReference type="SMART" id="SM00382">
    <property type="entry name" value="AAA"/>
    <property type="match status" value="1"/>
</dbReference>
<dbReference type="SUPFAM" id="SSF52540">
    <property type="entry name" value="P-loop containing nucleoside triphosphate hydrolases"/>
    <property type="match status" value="1"/>
</dbReference>
<dbReference type="PROSITE" id="PS50893">
    <property type="entry name" value="ABC_TRANSPORTER_2"/>
    <property type="match status" value="1"/>
</dbReference>
<dbReference type="PROSITE" id="PS51243">
    <property type="entry name" value="CCMA"/>
    <property type="match status" value="1"/>
</dbReference>
<proteinExistence type="inferred from homology"/>
<feature type="chain" id="PRO_0000271920" description="Cytochrome c biogenesis ATP-binding export protein CcmA">
    <location>
        <begin position="1"/>
        <end position="219"/>
    </location>
</feature>
<feature type="domain" description="ABC transporter" evidence="1">
    <location>
        <begin position="10"/>
        <end position="218"/>
    </location>
</feature>
<feature type="binding site" evidence="1">
    <location>
        <begin position="42"/>
        <end position="49"/>
    </location>
    <ligand>
        <name>ATP</name>
        <dbReference type="ChEBI" id="CHEBI:30616"/>
    </ligand>
</feature>